<protein>
    <recommendedName>
        <fullName>Metastasis-associated in colon cancer protein 1</fullName>
    </recommendedName>
    <alternativeName>
        <fullName>SH3 domain-containing protein 7a5</fullName>
    </alternativeName>
</protein>
<comment type="function">
    <text evidence="1">Acts as a transcription activator for MET and as a key regulator of HGF-MET signaling.</text>
</comment>
<comment type="subunit">
    <text evidence="1">Interacts with FASLG.</text>
</comment>
<comment type="subcellular location">
    <subcellularLocation>
        <location evidence="1">Cytoplasm</location>
    </subcellularLocation>
    <subcellularLocation>
        <location evidence="1">Nucleus</location>
    </subcellularLocation>
</comment>
<evidence type="ECO:0000250" key="1"/>
<evidence type="ECO:0000250" key="2">
    <source>
        <dbReference type="UniProtKB" id="Q6ZN28"/>
    </source>
</evidence>
<evidence type="ECO:0000255" key="3">
    <source>
        <dbReference type="PROSITE-ProRule" id="PRU00192"/>
    </source>
</evidence>
<evidence type="ECO:0000255" key="4">
    <source>
        <dbReference type="PROSITE-ProRule" id="PRU00485"/>
    </source>
</evidence>
<dbReference type="EMBL" id="CR858494">
    <property type="protein sequence ID" value="CAH90722.1"/>
    <property type="molecule type" value="mRNA"/>
</dbReference>
<dbReference type="FunCoup" id="Q5RBY8">
    <property type="interactions" value="991"/>
</dbReference>
<dbReference type="STRING" id="9601.ENSPPYP00000019895"/>
<dbReference type="eggNOG" id="ENOG502QZDM">
    <property type="taxonomic scope" value="Eukaryota"/>
</dbReference>
<dbReference type="InParanoid" id="Q5RBY8"/>
<dbReference type="Proteomes" id="UP000001595">
    <property type="component" value="Unplaced"/>
</dbReference>
<dbReference type="GO" id="GO:0005737">
    <property type="term" value="C:cytoplasm"/>
    <property type="evidence" value="ECO:0007669"/>
    <property type="project" value="UniProtKB-SubCell"/>
</dbReference>
<dbReference type="GO" id="GO:0005634">
    <property type="term" value="C:nucleus"/>
    <property type="evidence" value="ECO:0007669"/>
    <property type="project" value="UniProtKB-SubCell"/>
</dbReference>
<dbReference type="CDD" id="cd01670">
    <property type="entry name" value="Death"/>
    <property type="match status" value="1"/>
</dbReference>
<dbReference type="FunFam" id="2.60.220.30:FF:000012">
    <property type="entry name" value="Metastasis-associated in colon cancer 1"/>
    <property type="match status" value="1"/>
</dbReference>
<dbReference type="Gene3D" id="2.60.220.30">
    <property type="match status" value="1"/>
</dbReference>
<dbReference type="InterPro" id="IPR056183">
    <property type="entry name" value="DEATH_SH3BP4"/>
</dbReference>
<dbReference type="InterPro" id="IPR001452">
    <property type="entry name" value="SH3_domain"/>
</dbReference>
<dbReference type="InterPro" id="IPR056181">
    <property type="entry name" value="SH3BP4_C"/>
</dbReference>
<dbReference type="InterPro" id="IPR056182">
    <property type="entry name" value="UPA_SH3BP4"/>
</dbReference>
<dbReference type="InterPro" id="IPR000906">
    <property type="entry name" value="ZU5_dom"/>
</dbReference>
<dbReference type="PANTHER" id="PTHR15603:SF1">
    <property type="entry name" value="METASTASIS-ASSOCIATED IN COLON CANCER PROTEIN 1"/>
    <property type="match status" value="1"/>
</dbReference>
<dbReference type="PANTHER" id="PTHR15603">
    <property type="entry name" value="SH3 DOMAIN-CONTAINING PROTEIN"/>
    <property type="match status" value="1"/>
</dbReference>
<dbReference type="Pfam" id="PF24094">
    <property type="entry name" value="DEATH_SH3BP4"/>
    <property type="match status" value="1"/>
</dbReference>
<dbReference type="Pfam" id="PF23637">
    <property type="entry name" value="SH3BP4_C"/>
    <property type="match status" value="1"/>
</dbReference>
<dbReference type="Pfam" id="PF23640">
    <property type="entry name" value="UPA_SH3BP4"/>
    <property type="match status" value="1"/>
</dbReference>
<dbReference type="PROSITE" id="PS50002">
    <property type="entry name" value="SH3"/>
    <property type="match status" value="1"/>
</dbReference>
<dbReference type="PROSITE" id="PS51145">
    <property type="entry name" value="ZU5"/>
    <property type="match status" value="1"/>
</dbReference>
<gene>
    <name type="primary">MACC1</name>
</gene>
<reference key="1">
    <citation type="submission" date="2004-11" db="EMBL/GenBank/DDBJ databases">
        <authorList>
            <consortium name="The German cDNA consortium"/>
        </authorList>
    </citation>
    <scope>NUCLEOTIDE SEQUENCE [LARGE SCALE MRNA]</scope>
    <source>
        <tissue>Kidney</tissue>
    </source>
</reference>
<feature type="chain" id="PRO_0000329033" description="Metastasis-associated in colon cancer protein 1">
    <location>
        <begin position="1"/>
        <end position="854"/>
    </location>
</feature>
<feature type="domain" description="ZU5" evidence="4">
    <location>
        <begin position="212"/>
        <end position="349"/>
    </location>
</feature>
<feature type="domain" description="SH3" evidence="3">
    <location>
        <begin position="549"/>
        <end position="619"/>
    </location>
</feature>
<feature type="modified residue" description="Phosphoserine" evidence="2">
    <location>
        <position position="19"/>
    </location>
</feature>
<accession>Q5RBY8</accession>
<sequence length="854" mass="97087">MLITERKYFWSGRIAQSRSEANLVDMEAGKLSKSCNITECQDPDLLHNWPDAFTLHGNNASKVTNPFWNQLSASNPFLDDITQLRNNRKRNNISILKEDPLLFFREIENGNSFDSSGDELDVHQLLRQSSSRKSGRSKSVSELLDILDDTAHAHQSIHNSDQILLHDLEWLKNDREAYKMAWLSQRQLARSCLDLNTISQSPGWAQTQLAEVTKACKVNHQGGSVQLPESDITVHVPQGHVAVGEFQEVSLRAFLDPPHMLNHDLSCTVSPLLEIMLGNLNTMEALLLEMKIGAEVGKDPFSQVMTEMVCLHSLGKEGPFKILSNCYIYKDTIQVKLIDLSQVMYLVVAAQAKALQSPAATIWDYIHKTTSIGIYGPKYIHPSFTVVLTVCGHNYMPGQLTISDIKKCGKNISPVVFQLWGKQSFLLDKPQDLSISIFSCDPDFEVKTEGERKEIKQKQLEAGEVVHQQFLFSLVEHREMHLFDFCVQVELPNGEPVAQFCITTPDPTPNLKRLSNLPGYLQKKEEIKSAPLSPKILVKYPTFQDKTLNFTNYGVTLKAVLRQSKIDYFLEYFKGDTIALLGEGKVKVIGQSKVKEWYVGVLRGKIGLVHCKNVKVISKEQVMFMSDSVFTTRNLLEQIVLPLKKLTYIYSVVLTLVSEKVYDWKVLADVLGYSHLSVEDFDQIHADKESEKVSYVIKKLKEDCHTKRNTRKFLYELIVALLKMDCQALVARLIREAAVLTSAVKLGKGWRELAEKLVRLTKQQMEAYEIPHRGNTGDVAVEMMWKPAYDFLYTWSAHYGNNYRDVLQDLQSALDRMKNPVTKHWRELTGVLILVNSLEVLRVTAFSTSEEVWK</sequence>
<keyword id="KW-0010">Activator</keyword>
<keyword id="KW-0963">Cytoplasm</keyword>
<keyword id="KW-0539">Nucleus</keyword>
<keyword id="KW-0597">Phosphoprotein</keyword>
<keyword id="KW-1185">Reference proteome</keyword>
<keyword id="KW-0728">SH3 domain</keyword>
<keyword id="KW-0804">Transcription</keyword>
<keyword id="KW-0805">Transcription regulation</keyword>
<proteinExistence type="evidence at transcript level"/>
<organism>
    <name type="scientific">Pongo abelii</name>
    <name type="common">Sumatran orangutan</name>
    <name type="synonym">Pongo pygmaeus abelii</name>
    <dbReference type="NCBI Taxonomy" id="9601"/>
    <lineage>
        <taxon>Eukaryota</taxon>
        <taxon>Metazoa</taxon>
        <taxon>Chordata</taxon>
        <taxon>Craniata</taxon>
        <taxon>Vertebrata</taxon>
        <taxon>Euteleostomi</taxon>
        <taxon>Mammalia</taxon>
        <taxon>Eutheria</taxon>
        <taxon>Euarchontoglires</taxon>
        <taxon>Primates</taxon>
        <taxon>Haplorrhini</taxon>
        <taxon>Catarrhini</taxon>
        <taxon>Hominidae</taxon>
        <taxon>Pongo</taxon>
    </lineage>
</organism>
<name>MACC1_PONAB</name>